<proteinExistence type="inferred from homology"/>
<name>LEUC_CALS4</name>
<dbReference type="EC" id="4.2.1.33" evidence="1"/>
<dbReference type="EMBL" id="AE008691">
    <property type="protein sequence ID" value="AAM23334.1"/>
    <property type="molecule type" value="Genomic_DNA"/>
</dbReference>
<dbReference type="RefSeq" id="WP_011024551.1">
    <property type="nucleotide sequence ID" value="NC_003869.1"/>
</dbReference>
<dbReference type="SMR" id="Q8RDK2"/>
<dbReference type="STRING" id="273068.TTE0017"/>
<dbReference type="KEGG" id="tte:TTE0017"/>
<dbReference type="eggNOG" id="COG0065">
    <property type="taxonomic scope" value="Bacteria"/>
</dbReference>
<dbReference type="HOGENOM" id="CLU_006714_3_4_9"/>
<dbReference type="OrthoDB" id="9764318at2"/>
<dbReference type="UniPathway" id="UPA00048">
    <property type="reaction ID" value="UER00071"/>
</dbReference>
<dbReference type="Proteomes" id="UP000000555">
    <property type="component" value="Chromosome"/>
</dbReference>
<dbReference type="GO" id="GO:0003861">
    <property type="term" value="F:3-isopropylmalate dehydratase activity"/>
    <property type="evidence" value="ECO:0007669"/>
    <property type="project" value="UniProtKB-UniRule"/>
</dbReference>
<dbReference type="GO" id="GO:0051539">
    <property type="term" value="F:4 iron, 4 sulfur cluster binding"/>
    <property type="evidence" value="ECO:0007669"/>
    <property type="project" value="UniProtKB-KW"/>
</dbReference>
<dbReference type="GO" id="GO:0046872">
    <property type="term" value="F:metal ion binding"/>
    <property type="evidence" value="ECO:0007669"/>
    <property type="project" value="UniProtKB-KW"/>
</dbReference>
<dbReference type="GO" id="GO:0009098">
    <property type="term" value="P:L-leucine biosynthetic process"/>
    <property type="evidence" value="ECO:0007669"/>
    <property type="project" value="UniProtKB-UniRule"/>
</dbReference>
<dbReference type="CDD" id="cd01583">
    <property type="entry name" value="IPMI"/>
    <property type="match status" value="1"/>
</dbReference>
<dbReference type="Gene3D" id="3.30.499.10">
    <property type="entry name" value="Aconitase, domain 3"/>
    <property type="match status" value="2"/>
</dbReference>
<dbReference type="HAMAP" id="MF_01027">
    <property type="entry name" value="LeuC_type2"/>
    <property type="match status" value="1"/>
</dbReference>
<dbReference type="InterPro" id="IPR015931">
    <property type="entry name" value="Acnase/IPM_dHydase_lsu_aba_1/3"/>
</dbReference>
<dbReference type="InterPro" id="IPR001030">
    <property type="entry name" value="Acoase/IPM_deHydtase_lsu_aba"/>
</dbReference>
<dbReference type="InterPro" id="IPR018136">
    <property type="entry name" value="Aconitase_4Fe-4S_BS"/>
</dbReference>
<dbReference type="InterPro" id="IPR036008">
    <property type="entry name" value="Aconitase_4Fe-4S_dom"/>
</dbReference>
<dbReference type="InterPro" id="IPR011826">
    <property type="entry name" value="HAcnase/IPMdehydase_lsu_prok"/>
</dbReference>
<dbReference type="InterPro" id="IPR006251">
    <property type="entry name" value="Homoacnase/IPMdehydase_lsu"/>
</dbReference>
<dbReference type="InterPro" id="IPR050067">
    <property type="entry name" value="IPM_dehydratase_rel_enz"/>
</dbReference>
<dbReference type="InterPro" id="IPR033941">
    <property type="entry name" value="IPMI_cat"/>
</dbReference>
<dbReference type="InterPro" id="IPR011823">
    <property type="entry name" value="IsopropMal_deHydtase_lsu_bac"/>
</dbReference>
<dbReference type="NCBIfam" id="TIGR01343">
    <property type="entry name" value="hacA_fam"/>
    <property type="match status" value="1"/>
</dbReference>
<dbReference type="NCBIfam" id="TIGR02086">
    <property type="entry name" value="IPMI_arch"/>
    <property type="match status" value="1"/>
</dbReference>
<dbReference type="NCBIfam" id="TIGR02083">
    <property type="entry name" value="LEU2"/>
    <property type="match status" value="1"/>
</dbReference>
<dbReference type="NCBIfam" id="NF001614">
    <property type="entry name" value="PRK00402.1"/>
    <property type="match status" value="1"/>
</dbReference>
<dbReference type="PANTHER" id="PTHR43822:SF16">
    <property type="entry name" value="3-ISOPROPYLMALATE DEHYDRATASE LARGE SUBUNIT 2"/>
    <property type="match status" value="1"/>
</dbReference>
<dbReference type="PANTHER" id="PTHR43822">
    <property type="entry name" value="HOMOACONITASE, MITOCHONDRIAL-RELATED"/>
    <property type="match status" value="1"/>
</dbReference>
<dbReference type="Pfam" id="PF00330">
    <property type="entry name" value="Aconitase"/>
    <property type="match status" value="2"/>
</dbReference>
<dbReference type="PRINTS" id="PR00415">
    <property type="entry name" value="ACONITASE"/>
</dbReference>
<dbReference type="SUPFAM" id="SSF53732">
    <property type="entry name" value="Aconitase iron-sulfur domain"/>
    <property type="match status" value="1"/>
</dbReference>
<dbReference type="PROSITE" id="PS00450">
    <property type="entry name" value="ACONITASE_1"/>
    <property type="match status" value="1"/>
</dbReference>
<dbReference type="PROSITE" id="PS01244">
    <property type="entry name" value="ACONITASE_2"/>
    <property type="match status" value="1"/>
</dbReference>
<sequence length="418" mass="45511">MGLTLTQKILSAKAGREVKPGELIEIDVDMVLGNDITAPVAIKEFEKIGVDKVFDNTKIALVPDHFVPSKDIKSAEQVNVMRKFAKKYNIVNFFEVGRMGIEHALLPEQGLVLPGDVVIGADSHTCTYGALTCFATGVGSTDMAAAMATGKAWFKVPEAIKFVLKGNLGKWVSGKDVILYIIGKIGVDGALYKSMEFTGNIKALSIDDRFTIANMAIEAGAKNGIFDFDEITEAYVKKRAKREYKVFERDEDAEYSEVIEINLDDIRPQVAFPHLPENTRSIDEVGKVKIDQVVIGSCTNGRLSDMEIAYRILKGKKVHPDVRLIIFPATQEIYLECVKRGYIEEFIKAGAAVSTPTCGPCLGGHMGVLAKGERALATTNRNFVGRMGHPESEVYLASPAVAAASAIAGYIVSPEEVE</sequence>
<evidence type="ECO:0000255" key="1">
    <source>
        <dbReference type="HAMAP-Rule" id="MF_01027"/>
    </source>
</evidence>
<keyword id="KW-0004">4Fe-4S</keyword>
<keyword id="KW-0028">Amino-acid biosynthesis</keyword>
<keyword id="KW-0100">Branched-chain amino acid biosynthesis</keyword>
<keyword id="KW-0408">Iron</keyword>
<keyword id="KW-0411">Iron-sulfur</keyword>
<keyword id="KW-0432">Leucine biosynthesis</keyword>
<keyword id="KW-0456">Lyase</keyword>
<keyword id="KW-0479">Metal-binding</keyword>
<keyword id="KW-1185">Reference proteome</keyword>
<comment type="function">
    <text evidence="1">Catalyzes the isomerization between 2-isopropylmalate and 3-isopropylmalate, via the formation of 2-isopropylmaleate.</text>
</comment>
<comment type="catalytic activity">
    <reaction evidence="1">
        <text>(2R,3S)-3-isopropylmalate = (2S)-2-isopropylmalate</text>
        <dbReference type="Rhea" id="RHEA:32287"/>
        <dbReference type="ChEBI" id="CHEBI:1178"/>
        <dbReference type="ChEBI" id="CHEBI:35121"/>
        <dbReference type="EC" id="4.2.1.33"/>
    </reaction>
</comment>
<comment type="cofactor">
    <cofactor evidence="1">
        <name>[4Fe-4S] cluster</name>
        <dbReference type="ChEBI" id="CHEBI:49883"/>
    </cofactor>
    <text evidence="1">Binds 1 [4Fe-4S] cluster per subunit.</text>
</comment>
<comment type="pathway">
    <text evidence="1">Amino-acid biosynthesis; L-leucine biosynthesis; L-leucine from 3-methyl-2-oxobutanoate: step 2/4.</text>
</comment>
<comment type="subunit">
    <text evidence="1">Heterodimer of LeuC and LeuD.</text>
</comment>
<comment type="similarity">
    <text evidence="1">Belongs to the aconitase/IPM isomerase family. LeuC type 2 subfamily.</text>
</comment>
<accession>Q8RDK2</accession>
<organism>
    <name type="scientific">Caldanaerobacter subterraneus subsp. tengcongensis (strain DSM 15242 / JCM 11007 / NBRC 100824 / MB4)</name>
    <name type="common">Thermoanaerobacter tengcongensis</name>
    <dbReference type="NCBI Taxonomy" id="273068"/>
    <lineage>
        <taxon>Bacteria</taxon>
        <taxon>Bacillati</taxon>
        <taxon>Bacillota</taxon>
        <taxon>Clostridia</taxon>
        <taxon>Thermoanaerobacterales</taxon>
        <taxon>Thermoanaerobacteraceae</taxon>
        <taxon>Caldanaerobacter</taxon>
    </lineage>
</organism>
<reference key="1">
    <citation type="journal article" date="2002" name="Genome Res.">
        <title>A complete sequence of the T. tengcongensis genome.</title>
        <authorList>
            <person name="Bao Q."/>
            <person name="Tian Y."/>
            <person name="Li W."/>
            <person name="Xu Z."/>
            <person name="Xuan Z."/>
            <person name="Hu S."/>
            <person name="Dong W."/>
            <person name="Yang J."/>
            <person name="Chen Y."/>
            <person name="Xue Y."/>
            <person name="Xu Y."/>
            <person name="Lai X."/>
            <person name="Huang L."/>
            <person name="Dong X."/>
            <person name="Ma Y."/>
            <person name="Ling L."/>
            <person name="Tan H."/>
            <person name="Chen R."/>
            <person name="Wang J."/>
            <person name="Yu J."/>
            <person name="Yang H."/>
        </authorList>
    </citation>
    <scope>NUCLEOTIDE SEQUENCE [LARGE SCALE GENOMIC DNA]</scope>
    <source>
        <strain>DSM 15242 / JCM 11007 / NBRC 100824 / MB4</strain>
    </source>
</reference>
<gene>
    <name evidence="1" type="primary">leuC</name>
    <name type="ordered locus">TTE0017</name>
</gene>
<feature type="chain" id="PRO_0000076862" description="3-isopropylmalate dehydratase large subunit">
    <location>
        <begin position="1"/>
        <end position="418"/>
    </location>
</feature>
<feature type="binding site" evidence="1">
    <location>
        <position position="298"/>
    </location>
    <ligand>
        <name>[4Fe-4S] cluster</name>
        <dbReference type="ChEBI" id="CHEBI:49883"/>
    </ligand>
</feature>
<feature type="binding site" evidence="1">
    <location>
        <position position="358"/>
    </location>
    <ligand>
        <name>[4Fe-4S] cluster</name>
        <dbReference type="ChEBI" id="CHEBI:49883"/>
    </ligand>
</feature>
<feature type="binding site" evidence="1">
    <location>
        <position position="361"/>
    </location>
    <ligand>
        <name>[4Fe-4S] cluster</name>
        <dbReference type="ChEBI" id="CHEBI:49883"/>
    </ligand>
</feature>
<protein>
    <recommendedName>
        <fullName evidence="1">3-isopropylmalate dehydratase large subunit</fullName>
        <ecNumber evidence="1">4.2.1.33</ecNumber>
    </recommendedName>
    <alternativeName>
        <fullName evidence="1">Alpha-IPM isomerase</fullName>
        <shortName evidence="1">IPMI</shortName>
    </alternativeName>
    <alternativeName>
        <fullName evidence="1">Isopropylmalate isomerase</fullName>
    </alternativeName>
</protein>